<evidence type="ECO:0000255" key="1">
    <source>
        <dbReference type="HAMAP-Rule" id="MF_00046"/>
    </source>
</evidence>
<gene>
    <name evidence="1" type="primary">murC</name>
    <name type="ordered locus">PputGB1_4511</name>
</gene>
<feature type="chain" id="PRO_1000074748" description="UDP-N-acetylmuramate--L-alanine ligase">
    <location>
        <begin position="1"/>
        <end position="482"/>
    </location>
</feature>
<feature type="binding site" evidence="1">
    <location>
        <begin position="123"/>
        <end position="129"/>
    </location>
    <ligand>
        <name>ATP</name>
        <dbReference type="ChEBI" id="CHEBI:30616"/>
    </ligand>
</feature>
<comment type="function">
    <text evidence="1">Cell wall formation.</text>
</comment>
<comment type="catalytic activity">
    <reaction evidence="1">
        <text>UDP-N-acetyl-alpha-D-muramate + L-alanine + ATP = UDP-N-acetyl-alpha-D-muramoyl-L-alanine + ADP + phosphate + H(+)</text>
        <dbReference type="Rhea" id="RHEA:23372"/>
        <dbReference type="ChEBI" id="CHEBI:15378"/>
        <dbReference type="ChEBI" id="CHEBI:30616"/>
        <dbReference type="ChEBI" id="CHEBI:43474"/>
        <dbReference type="ChEBI" id="CHEBI:57972"/>
        <dbReference type="ChEBI" id="CHEBI:70757"/>
        <dbReference type="ChEBI" id="CHEBI:83898"/>
        <dbReference type="ChEBI" id="CHEBI:456216"/>
        <dbReference type="EC" id="6.3.2.8"/>
    </reaction>
</comment>
<comment type="pathway">
    <text evidence="1">Cell wall biogenesis; peptidoglycan biosynthesis.</text>
</comment>
<comment type="subcellular location">
    <subcellularLocation>
        <location evidence="1">Cytoplasm</location>
    </subcellularLocation>
</comment>
<comment type="similarity">
    <text evidence="1">Belongs to the MurCDEF family.</text>
</comment>
<keyword id="KW-0067">ATP-binding</keyword>
<keyword id="KW-0131">Cell cycle</keyword>
<keyword id="KW-0132">Cell division</keyword>
<keyword id="KW-0133">Cell shape</keyword>
<keyword id="KW-0961">Cell wall biogenesis/degradation</keyword>
<keyword id="KW-0963">Cytoplasm</keyword>
<keyword id="KW-0436">Ligase</keyword>
<keyword id="KW-0547">Nucleotide-binding</keyword>
<keyword id="KW-0573">Peptidoglycan synthesis</keyword>
<protein>
    <recommendedName>
        <fullName evidence="1">UDP-N-acetylmuramate--L-alanine ligase</fullName>
        <ecNumber evidence="1">6.3.2.8</ecNumber>
    </recommendedName>
    <alternativeName>
        <fullName evidence="1">UDP-N-acetylmuramoyl-L-alanine synthetase</fullName>
    </alternativeName>
</protein>
<reference key="1">
    <citation type="submission" date="2008-01" db="EMBL/GenBank/DDBJ databases">
        <title>Complete sequence of Pseudomonas putida GB-1.</title>
        <authorList>
            <consortium name="US DOE Joint Genome Institute"/>
            <person name="Copeland A."/>
            <person name="Lucas S."/>
            <person name="Lapidus A."/>
            <person name="Barry K."/>
            <person name="Glavina del Rio T."/>
            <person name="Dalin E."/>
            <person name="Tice H."/>
            <person name="Pitluck S."/>
            <person name="Bruce D."/>
            <person name="Goodwin L."/>
            <person name="Chertkov O."/>
            <person name="Brettin T."/>
            <person name="Detter J.C."/>
            <person name="Han C."/>
            <person name="Kuske C.R."/>
            <person name="Schmutz J."/>
            <person name="Larimer F."/>
            <person name="Land M."/>
            <person name="Hauser L."/>
            <person name="Kyrpides N."/>
            <person name="Kim E."/>
            <person name="McCarthy J.K."/>
            <person name="Richardson P."/>
        </authorList>
    </citation>
    <scope>NUCLEOTIDE SEQUENCE [LARGE SCALE GENOMIC DNA]</scope>
    <source>
        <strain>GB-1</strain>
    </source>
</reference>
<sequence length="482" mass="52127">MVESQKAMPQPKMGRIRRIHFVGIGGVGMCGIAEVLLNLGYEVSGSDLKASPVTERLESFGAEIFVGHRAENAATADVLVVSSAINPANPEVATALERRIPVVPRAEMLAELMRYRHGVAVAGTHGKTTTTSLLASVFAAGGLDPTFVIGGRLTAAGTNAQLGTSRYLIAEADESDASFLHLQPMVAVVTNIDADHMATYEGDFNKLKKTFVEFLHNLPFYGLAVMCLDDPVVREILPQVKRPTVTYGFSEEADIRAINVRQQGMQTHFTVLRRDCEPLEVSVNMPGNHNVLNALATIAIATDEGITDEAIIQGLSGFQGVGRRFQVYGELPVEGGSVMLVDDYGHHPTEVAAVIKAVRGGWPSRRLVIVYQPHRYSRTRDLYDDFVQVLGDANVLLLMEVYPAGEEPIPGADSRQLCHSIRQRGKLDPIYIERGAELAPLVKPLLRAGDILICQGAGDVGGLAPQLMKSPLFAGAKQEKSK</sequence>
<dbReference type="EC" id="6.3.2.8" evidence="1"/>
<dbReference type="EMBL" id="CP000926">
    <property type="protein sequence ID" value="ABZ00398.1"/>
    <property type="molecule type" value="Genomic_DNA"/>
</dbReference>
<dbReference type="RefSeq" id="WP_012274058.1">
    <property type="nucleotide sequence ID" value="NC_010322.1"/>
</dbReference>
<dbReference type="SMR" id="B0KFS5"/>
<dbReference type="KEGG" id="ppg:PputGB1_4511"/>
<dbReference type="eggNOG" id="COG0773">
    <property type="taxonomic scope" value="Bacteria"/>
</dbReference>
<dbReference type="HOGENOM" id="CLU_028104_2_2_6"/>
<dbReference type="UniPathway" id="UPA00219"/>
<dbReference type="Proteomes" id="UP000002157">
    <property type="component" value="Chromosome"/>
</dbReference>
<dbReference type="GO" id="GO:0005737">
    <property type="term" value="C:cytoplasm"/>
    <property type="evidence" value="ECO:0007669"/>
    <property type="project" value="UniProtKB-SubCell"/>
</dbReference>
<dbReference type="GO" id="GO:0005524">
    <property type="term" value="F:ATP binding"/>
    <property type="evidence" value="ECO:0007669"/>
    <property type="project" value="UniProtKB-UniRule"/>
</dbReference>
<dbReference type="GO" id="GO:0008763">
    <property type="term" value="F:UDP-N-acetylmuramate-L-alanine ligase activity"/>
    <property type="evidence" value="ECO:0007669"/>
    <property type="project" value="UniProtKB-UniRule"/>
</dbReference>
<dbReference type="GO" id="GO:0051301">
    <property type="term" value="P:cell division"/>
    <property type="evidence" value="ECO:0007669"/>
    <property type="project" value="UniProtKB-KW"/>
</dbReference>
<dbReference type="GO" id="GO:0071555">
    <property type="term" value="P:cell wall organization"/>
    <property type="evidence" value="ECO:0007669"/>
    <property type="project" value="UniProtKB-KW"/>
</dbReference>
<dbReference type="GO" id="GO:0009252">
    <property type="term" value="P:peptidoglycan biosynthetic process"/>
    <property type="evidence" value="ECO:0007669"/>
    <property type="project" value="UniProtKB-UniRule"/>
</dbReference>
<dbReference type="GO" id="GO:0008360">
    <property type="term" value="P:regulation of cell shape"/>
    <property type="evidence" value="ECO:0007669"/>
    <property type="project" value="UniProtKB-KW"/>
</dbReference>
<dbReference type="FunFam" id="3.40.1190.10:FF:000001">
    <property type="entry name" value="UDP-N-acetylmuramate--L-alanine ligase"/>
    <property type="match status" value="1"/>
</dbReference>
<dbReference type="Gene3D" id="3.90.190.20">
    <property type="entry name" value="Mur ligase, C-terminal domain"/>
    <property type="match status" value="1"/>
</dbReference>
<dbReference type="Gene3D" id="3.40.1190.10">
    <property type="entry name" value="Mur-like, catalytic domain"/>
    <property type="match status" value="1"/>
</dbReference>
<dbReference type="Gene3D" id="3.40.50.720">
    <property type="entry name" value="NAD(P)-binding Rossmann-like Domain"/>
    <property type="match status" value="1"/>
</dbReference>
<dbReference type="HAMAP" id="MF_00046">
    <property type="entry name" value="MurC"/>
    <property type="match status" value="1"/>
</dbReference>
<dbReference type="InterPro" id="IPR036565">
    <property type="entry name" value="Mur-like_cat_sf"/>
</dbReference>
<dbReference type="InterPro" id="IPR004101">
    <property type="entry name" value="Mur_ligase_C"/>
</dbReference>
<dbReference type="InterPro" id="IPR036615">
    <property type="entry name" value="Mur_ligase_C_dom_sf"/>
</dbReference>
<dbReference type="InterPro" id="IPR013221">
    <property type="entry name" value="Mur_ligase_cen"/>
</dbReference>
<dbReference type="InterPro" id="IPR000713">
    <property type="entry name" value="Mur_ligase_N"/>
</dbReference>
<dbReference type="InterPro" id="IPR050061">
    <property type="entry name" value="MurCDEF_pg_biosynth"/>
</dbReference>
<dbReference type="InterPro" id="IPR005758">
    <property type="entry name" value="UDP-N-AcMur_Ala_ligase_MurC"/>
</dbReference>
<dbReference type="NCBIfam" id="TIGR01082">
    <property type="entry name" value="murC"/>
    <property type="match status" value="1"/>
</dbReference>
<dbReference type="PANTHER" id="PTHR43445:SF3">
    <property type="entry name" value="UDP-N-ACETYLMURAMATE--L-ALANINE LIGASE"/>
    <property type="match status" value="1"/>
</dbReference>
<dbReference type="PANTHER" id="PTHR43445">
    <property type="entry name" value="UDP-N-ACETYLMURAMATE--L-ALANINE LIGASE-RELATED"/>
    <property type="match status" value="1"/>
</dbReference>
<dbReference type="Pfam" id="PF01225">
    <property type="entry name" value="Mur_ligase"/>
    <property type="match status" value="1"/>
</dbReference>
<dbReference type="Pfam" id="PF02875">
    <property type="entry name" value="Mur_ligase_C"/>
    <property type="match status" value="1"/>
</dbReference>
<dbReference type="Pfam" id="PF08245">
    <property type="entry name" value="Mur_ligase_M"/>
    <property type="match status" value="1"/>
</dbReference>
<dbReference type="SUPFAM" id="SSF51984">
    <property type="entry name" value="MurCD N-terminal domain"/>
    <property type="match status" value="1"/>
</dbReference>
<dbReference type="SUPFAM" id="SSF53623">
    <property type="entry name" value="MurD-like peptide ligases, catalytic domain"/>
    <property type="match status" value="1"/>
</dbReference>
<dbReference type="SUPFAM" id="SSF53244">
    <property type="entry name" value="MurD-like peptide ligases, peptide-binding domain"/>
    <property type="match status" value="1"/>
</dbReference>
<name>MURC_PSEPG</name>
<organism>
    <name type="scientific">Pseudomonas putida (strain GB-1)</name>
    <dbReference type="NCBI Taxonomy" id="76869"/>
    <lineage>
        <taxon>Bacteria</taxon>
        <taxon>Pseudomonadati</taxon>
        <taxon>Pseudomonadota</taxon>
        <taxon>Gammaproteobacteria</taxon>
        <taxon>Pseudomonadales</taxon>
        <taxon>Pseudomonadaceae</taxon>
        <taxon>Pseudomonas</taxon>
    </lineage>
</organism>
<proteinExistence type="inferred from homology"/>
<accession>B0KFS5</accession>